<protein>
    <recommendedName>
        <fullName evidence="2">Small ribosomal subunit protein uS9</fullName>
    </recommendedName>
    <alternativeName>
        <fullName evidence="3">30S ribosomal protein S9</fullName>
    </alternativeName>
</protein>
<sequence length="130" mass="14826">MAENQYYGTGRRKSSAARVFIKPGNGKIVINQRSLEQYFGRETARMVVRQPLELVDMVEKLDLYITVKGGGISGQAGAIRHGITRALMEYDESLRGELRKAGFVTRDARQVERKKVGLRKARRRPQFSKR</sequence>
<organism>
    <name type="scientific">Salmonella typhi</name>
    <dbReference type="NCBI Taxonomy" id="90370"/>
    <lineage>
        <taxon>Bacteria</taxon>
        <taxon>Pseudomonadati</taxon>
        <taxon>Pseudomonadota</taxon>
        <taxon>Gammaproteobacteria</taxon>
        <taxon>Enterobacterales</taxon>
        <taxon>Enterobacteriaceae</taxon>
        <taxon>Salmonella</taxon>
    </lineage>
</organism>
<accession>P66644</accession>
<accession>Q8XFX5</accession>
<evidence type="ECO:0000250" key="1"/>
<evidence type="ECO:0000255" key="2">
    <source>
        <dbReference type="HAMAP-Rule" id="MF_00532"/>
    </source>
</evidence>
<evidence type="ECO:0000305" key="3"/>
<comment type="similarity">
    <text evidence="2">Belongs to the universal ribosomal protein uS9 family.</text>
</comment>
<reference key="1">
    <citation type="journal article" date="2001" name="Nature">
        <title>Complete genome sequence of a multiple drug resistant Salmonella enterica serovar Typhi CT18.</title>
        <authorList>
            <person name="Parkhill J."/>
            <person name="Dougan G."/>
            <person name="James K.D."/>
            <person name="Thomson N.R."/>
            <person name="Pickard D."/>
            <person name="Wain J."/>
            <person name="Churcher C.M."/>
            <person name="Mungall K.L."/>
            <person name="Bentley S.D."/>
            <person name="Holden M.T.G."/>
            <person name="Sebaihia M."/>
            <person name="Baker S."/>
            <person name="Basham D."/>
            <person name="Brooks K."/>
            <person name="Chillingworth T."/>
            <person name="Connerton P."/>
            <person name="Cronin A."/>
            <person name="Davis P."/>
            <person name="Davies R.M."/>
            <person name="Dowd L."/>
            <person name="White N."/>
            <person name="Farrar J."/>
            <person name="Feltwell T."/>
            <person name="Hamlin N."/>
            <person name="Haque A."/>
            <person name="Hien T.T."/>
            <person name="Holroyd S."/>
            <person name="Jagels K."/>
            <person name="Krogh A."/>
            <person name="Larsen T.S."/>
            <person name="Leather S."/>
            <person name="Moule S."/>
            <person name="O'Gaora P."/>
            <person name="Parry C."/>
            <person name="Quail M.A."/>
            <person name="Rutherford K.M."/>
            <person name="Simmonds M."/>
            <person name="Skelton J."/>
            <person name="Stevens K."/>
            <person name="Whitehead S."/>
            <person name="Barrell B.G."/>
        </authorList>
    </citation>
    <scope>NUCLEOTIDE SEQUENCE [LARGE SCALE GENOMIC DNA]</scope>
    <source>
        <strain>CT18</strain>
    </source>
</reference>
<reference key="2">
    <citation type="journal article" date="2003" name="J. Bacteriol.">
        <title>Comparative genomics of Salmonella enterica serovar Typhi strains Ty2 and CT18.</title>
        <authorList>
            <person name="Deng W."/>
            <person name="Liou S.-R."/>
            <person name="Plunkett G. III"/>
            <person name="Mayhew G.F."/>
            <person name="Rose D.J."/>
            <person name="Burland V."/>
            <person name="Kodoyianni V."/>
            <person name="Schwartz D.C."/>
            <person name="Blattner F.R."/>
        </authorList>
    </citation>
    <scope>NUCLEOTIDE SEQUENCE [LARGE SCALE GENOMIC DNA]</scope>
    <source>
        <strain>ATCC 700931 / Ty2</strain>
    </source>
</reference>
<name>RS9_SALTI</name>
<feature type="initiator methionine" description="Removed" evidence="1">
    <location>
        <position position="1"/>
    </location>
</feature>
<feature type="chain" id="PRO_0000111401" description="Small ribosomal subunit protein uS9">
    <location>
        <begin position="2"/>
        <end position="130"/>
    </location>
</feature>
<gene>
    <name evidence="2" type="primary">rpsI</name>
    <name type="ordered locus">STY3524</name>
    <name type="ordered locus">t3260</name>
</gene>
<proteinExistence type="inferred from homology"/>
<dbReference type="EMBL" id="AL513382">
    <property type="protein sequence ID" value="CAD07860.1"/>
    <property type="molecule type" value="Genomic_DNA"/>
</dbReference>
<dbReference type="EMBL" id="AE014613">
    <property type="protein sequence ID" value="AAO70795.1"/>
    <property type="molecule type" value="Genomic_DNA"/>
</dbReference>
<dbReference type="RefSeq" id="NP_457721.1">
    <property type="nucleotide sequence ID" value="NC_003198.1"/>
</dbReference>
<dbReference type="RefSeq" id="WP_000829815.1">
    <property type="nucleotide sequence ID" value="NZ_WSUR01000003.1"/>
</dbReference>
<dbReference type="SMR" id="P66644"/>
<dbReference type="STRING" id="220341.gene:17587373"/>
<dbReference type="GeneID" id="97393262"/>
<dbReference type="KEGG" id="stt:t3260"/>
<dbReference type="KEGG" id="sty:STY3524"/>
<dbReference type="PATRIC" id="fig|220341.7.peg.3588"/>
<dbReference type="eggNOG" id="COG0103">
    <property type="taxonomic scope" value="Bacteria"/>
</dbReference>
<dbReference type="HOGENOM" id="CLU_046483_2_1_6"/>
<dbReference type="OMA" id="KFQFSKR"/>
<dbReference type="OrthoDB" id="9803965at2"/>
<dbReference type="Proteomes" id="UP000000541">
    <property type="component" value="Chromosome"/>
</dbReference>
<dbReference type="Proteomes" id="UP000002670">
    <property type="component" value="Chromosome"/>
</dbReference>
<dbReference type="GO" id="GO:0022627">
    <property type="term" value="C:cytosolic small ribosomal subunit"/>
    <property type="evidence" value="ECO:0007669"/>
    <property type="project" value="TreeGrafter"/>
</dbReference>
<dbReference type="GO" id="GO:0003723">
    <property type="term" value="F:RNA binding"/>
    <property type="evidence" value="ECO:0007669"/>
    <property type="project" value="TreeGrafter"/>
</dbReference>
<dbReference type="GO" id="GO:0003735">
    <property type="term" value="F:structural constituent of ribosome"/>
    <property type="evidence" value="ECO:0007669"/>
    <property type="project" value="InterPro"/>
</dbReference>
<dbReference type="GO" id="GO:0006412">
    <property type="term" value="P:translation"/>
    <property type="evidence" value="ECO:0007669"/>
    <property type="project" value="UniProtKB-UniRule"/>
</dbReference>
<dbReference type="FunFam" id="3.30.230.10:FF:000001">
    <property type="entry name" value="30S ribosomal protein S9"/>
    <property type="match status" value="1"/>
</dbReference>
<dbReference type="Gene3D" id="3.30.230.10">
    <property type="match status" value="1"/>
</dbReference>
<dbReference type="HAMAP" id="MF_00532_B">
    <property type="entry name" value="Ribosomal_uS9_B"/>
    <property type="match status" value="1"/>
</dbReference>
<dbReference type="InterPro" id="IPR020568">
    <property type="entry name" value="Ribosomal_Su5_D2-typ_SF"/>
</dbReference>
<dbReference type="InterPro" id="IPR000754">
    <property type="entry name" value="Ribosomal_uS9"/>
</dbReference>
<dbReference type="InterPro" id="IPR023035">
    <property type="entry name" value="Ribosomal_uS9_bac/plastid"/>
</dbReference>
<dbReference type="InterPro" id="IPR020574">
    <property type="entry name" value="Ribosomal_uS9_CS"/>
</dbReference>
<dbReference type="InterPro" id="IPR014721">
    <property type="entry name" value="Ribsml_uS5_D2-typ_fold_subgr"/>
</dbReference>
<dbReference type="NCBIfam" id="NF001099">
    <property type="entry name" value="PRK00132.1"/>
    <property type="match status" value="1"/>
</dbReference>
<dbReference type="PANTHER" id="PTHR21569">
    <property type="entry name" value="RIBOSOMAL PROTEIN S9"/>
    <property type="match status" value="1"/>
</dbReference>
<dbReference type="PANTHER" id="PTHR21569:SF1">
    <property type="entry name" value="SMALL RIBOSOMAL SUBUNIT PROTEIN US9M"/>
    <property type="match status" value="1"/>
</dbReference>
<dbReference type="Pfam" id="PF00380">
    <property type="entry name" value="Ribosomal_S9"/>
    <property type="match status" value="1"/>
</dbReference>
<dbReference type="SUPFAM" id="SSF54211">
    <property type="entry name" value="Ribosomal protein S5 domain 2-like"/>
    <property type="match status" value="1"/>
</dbReference>
<dbReference type="PROSITE" id="PS00360">
    <property type="entry name" value="RIBOSOMAL_S9"/>
    <property type="match status" value="1"/>
</dbReference>
<keyword id="KW-0687">Ribonucleoprotein</keyword>
<keyword id="KW-0689">Ribosomal protein</keyword>